<protein>
    <recommendedName>
        <fullName>FK506-binding protein 2</fullName>
        <ecNumber>5.2.1.8</ecNumber>
    </recommendedName>
    <alternativeName>
        <fullName>Peptidyl-prolyl cis-trans isomerase</fullName>
        <shortName>PPIase</shortName>
    </alternativeName>
    <alternativeName>
        <fullName>Rotamase</fullName>
    </alternativeName>
</protein>
<gene>
    <name type="primary">FPR2</name>
    <name type="ordered locus">YALI0A19602g</name>
</gene>
<feature type="signal peptide" evidence="2">
    <location>
        <begin position="1"/>
        <end position="20"/>
    </location>
</feature>
<feature type="chain" id="PRO_0000233072" description="FK506-binding protein 2">
    <location>
        <begin position="21"/>
        <end position="144"/>
    </location>
</feature>
<feature type="domain" description="PPIase FKBP-type" evidence="3">
    <location>
        <begin position="48"/>
        <end position="136"/>
    </location>
</feature>
<feature type="short sequence motif" description="Prevents secretion from ER" evidence="4">
    <location>
        <begin position="141"/>
        <end position="144"/>
    </location>
</feature>
<organism>
    <name type="scientific">Yarrowia lipolytica (strain CLIB 122 / E 150)</name>
    <name type="common">Yeast</name>
    <name type="synonym">Candida lipolytica</name>
    <dbReference type="NCBI Taxonomy" id="284591"/>
    <lineage>
        <taxon>Eukaryota</taxon>
        <taxon>Fungi</taxon>
        <taxon>Dikarya</taxon>
        <taxon>Ascomycota</taxon>
        <taxon>Saccharomycotina</taxon>
        <taxon>Dipodascomycetes</taxon>
        <taxon>Dipodascales</taxon>
        <taxon>Dipodascales incertae sedis</taxon>
        <taxon>Yarrowia</taxon>
    </lineage>
</organism>
<evidence type="ECO:0000250" key="1"/>
<evidence type="ECO:0000255" key="2"/>
<evidence type="ECO:0000255" key="3">
    <source>
        <dbReference type="PROSITE-ProRule" id="PRU00277"/>
    </source>
</evidence>
<evidence type="ECO:0000255" key="4">
    <source>
        <dbReference type="PROSITE-ProRule" id="PRU10138"/>
    </source>
</evidence>
<evidence type="ECO:0000305" key="5"/>
<dbReference type="EC" id="5.2.1.8"/>
<dbReference type="EMBL" id="CR382127">
    <property type="protein sequence ID" value="CAG84187.1"/>
    <property type="molecule type" value="Genomic_DNA"/>
</dbReference>
<dbReference type="RefSeq" id="XP_500249.1">
    <property type="nucleotide sequence ID" value="XM_500249.1"/>
</dbReference>
<dbReference type="SMR" id="Q6CGG3"/>
<dbReference type="FunCoup" id="Q6CGG3">
    <property type="interactions" value="585"/>
</dbReference>
<dbReference type="STRING" id="284591.Q6CGG3"/>
<dbReference type="EnsemblFungi" id="CAG84187">
    <property type="protein sequence ID" value="CAG84187"/>
    <property type="gene ID" value="YALI0_A19602g"/>
</dbReference>
<dbReference type="KEGG" id="yli:2906479"/>
<dbReference type="VEuPathDB" id="FungiDB:YALI0_A19602g"/>
<dbReference type="HOGENOM" id="CLU_013615_8_2_1"/>
<dbReference type="InParanoid" id="Q6CGG3"/>
<dbReference type="OMA" id="KPASCEI"/>
<dbReference type="OrthoDB" id="122662at4891"/>
<dbReference type="Proteomes" id="UP000001300">
    <property type="component" value="Chromosome A"/>
</dbReference>
<dbReference type="GO" id="GO:0005783">
    <property type="term" value="C:endoplasmic reticulum"/>
    <property type="evidence" value="ECO:0000318"/>
    <property type="project" value="GO_Central"/>
</dbReference>
<dbReference type="GO" id="GO:0003755">
    <property type="term" value="F:peptidyl-prolyl cis-trans isomerase activity"/>
    <property type="evidence" value="ECO:0000318"/>
    <property type="project" value="GO_Central"/>
</dbReference>
<dbReference type="GO" id="GO:0061077">
    <property type="term" value="P:chaperone-mediated protein folding"/>
    <property type="evidence" value="ECO:0007669"/>
    <property type="project" value="InterPro"/>
</dbReference>
<dbReference type="FunFam" id="3.10.50.40:FF:000006">
    <property type="entry name" value="Peptidyl-prolyl cis-trans isomerase"/>
    <property type="match status" value="1"/>
</dbReference>
<dbReference type="Gene3D" id="3.10.50.40">
    <property type="match status" value="1"/>
</dbReference>
<dbReference type="InterPro" id="IPR044609">
    <property type="entry name" value="FKBP2/11"/>
</dbReference>
<dbReference type="InterPro" id="IPR046357">
    <property type="entry name" value="PPIase_dom_sf"/>
</dbReference>
<dbReference type="InterPro" id="IPR001179">
    <property type="entry name" value="PPIase_FKBP_dom"/>
</dbReference>
<dbReference type="PANTHER" id="PTHR45779">
    <property type="entry name" value="PEPTIDYLPROLYL ISOMERASE"/>
    <property type="match status" value="1"/>
</dbReference>
<dbReference type="PANTHER" id="PTHR45779:SF7">
    <property type="entry name" value="PEPTIDYLPROLYL ISOMERASE"/>
    <property type="match status" value="1"/>
</dbReference>
<dbReference type="Pfam" id="PF00254">
    <property type="entry name" value="FKBP_C"/>
    <property type="match status" value="1"/>
</dbReference>
<dbReference type="SUPFAM" id="SSF54534">
    <property type="entry name" value="FKBP-like"/>
    <property type="match status" value="1"/>
</dbReference>
<dbReference type="PROSITE" id="PS00014">
    <property type="entry name" value="ER_TARGET"/>
    <property type="match status" value="1"/>
</dbReference>
<dbReference type="PROSITE" id="PS50059">
    <property type="entry name" value="FKBP_PPIASE"/>
    <property type="match status" value="1"/>
</dbReference>
<sequence length="144" mass="15605">MARIIVLIVAFMALIAGVFATEEKLAKLQIGILKKISPEECTQKARKGDTVSVHYTGKLEDGTVFDSSVERGQPIQFPLGTGRVIPGWDQGILGMCVGEKRKLTIPPHLAYGKQGAGRVIPPDSTLIFTTELVSIDNDGDRDEL</sequence>
<accession>Q6CGG3</accession>
<proteinExistence type="inferred from homology"/>
<name>FKBP2_YARLI</name>
<reference key="1">
    <citation type="journal article" date="2004" name="Nature">
        <title>Genome evolution in yeasts.</title>
        <authorList>
            <person name="Dujon B."/>
            <person name="Sherman D."/>
            <person name="Fischer G."/>
            <person name="Durrens P."/>
            <person name="Casaregola S."/>
            <person name="Lafontaine I."/>
            <person name="de Montigny J."/>
            <person name="Marck C."/>
            <person name="Neuveglise C."/>
            <person name="Talla E."/>
            <person name="Goffard N."/>
            <person name="Frangeul L."/>
            <person name="Aigle M."/>
            <person name="Anthouard V."/>
            <person name="Babour A."/>
            <person name="Barbe V."/>
            <person name="Barnay S."/>
            <person name="Blanchin S."/>
            <person name="Beckerich J.-M."/>
            <person name="Beyne E."/>
            <person name="Bleykasten C."/>
            <person name="Boisrame A."/>
            <person name="Boyer J."/>
            <person name="Cattolico L."/>
            <person name="Confanioleri F."/>
            <person name="de Daruvar A."/>
            <person name="Despons L."/>
            <person name="Fabre E."/>
            <person name="Fairhead C."/>
            <person name="Ferry-Dumazet H."/>
            <person name="Groppi A."/>
            <person name="Hantraye F."/>
            <person name="Hennequin C."/>
            <person name="Jauniaux N."/>
            <person name="Joyet P."/>
            <person name="Kachouri R."/>
            <person name="Kerrest A."/>
            <person name="Koszul R."/>
            <person name="Lemaire M."/>
            <person name="Lesur I."/>
            <person name="Ma L."/>
            <person name="Muller H."/>
            <person name="Nicaud J.-M."/>
            <person name="Nikolski M."/>
            <person name="Oztas S."/>
            <person name="Ozier-Kalogeropoulos O."/>
            <person name="Pellenz S."/>
            <person name="Potier S."/>
            <person name="Richard G.-F."/>
            <person name="Straub M.-L."/>
            <person name="Suleau A."/>
            <person name="Swennen D."/>
            <person name="Tekaia F."/>
            <person name="Wesolowski-Louvel M."/>
            <person name="Westhof E."/>
            <person name="Wirth B."/>
            <person name="Zeniou-Meyer M."/>
            <person name="Zivanovic Y."/>
            <person name="Bolotin-Fukuhara M."/>
            <person name="Thierry A."/>
            <person name="Bouchier C."/>
            <person name="Caudron B."/>
            <person name="Scarpelli C."/>
            <person name="Gaillardin C."/>
            <person name="Weissenbach J."/>
            <person name="Wincker P."/>
            <person name="Souciet J.-L."/>
        </authorList>
    </citation>
    <scope>NUCLEOTIDE SEQUENCE [LARGE SCALE GENOMIC DNA]</scope>
    <source>
        <strain>CLIB 122 / E 150</strain>
    </source>
</reference>
<keyword id="KW-0256">Endoplasmic reticulum</keyword>
<keyword id="KW-0413">Isomerase</keyword>
<keyword id="KW-1185">Reference proteome</keyword>
<keyword id="KW-0697">Rotamase</keyword>
<keyword id="KW-0732">Signal</keyword>
<comment type="function">
    <text evidence="1">PPIases accelerate the folding of proteins. It catalyzes the cis-trans isomerization of proline imidic peptide bonds in oligopeptides (By similarity).</text>
</comment>
<comment type="catalytic activity">
    <reaction>
        <text>[protein]-peptidylproline (omega=180) = [protein]-peptidylproline (omega=0)</text>
        <dbReference type="Rhea" id="RHEA:16237"/>
        <dbReference type="Rhea" id="RHEA-COMP:10747"/>
        <dbReference type="Rhea" id="RHEA-COMP:10748"/>
        <dbReference type="ChEBI" id="CHEBI:83833"/>
        <dbReference type="ChEBI" id="CHEBI:83834"/>
        <dbReference type="EC" id="5.2.1.8"/>
    </reaction>
</comment>
<comment type="activity regulation">
    <text evidence="1">Inhibited by both FK506 and rapamycin.</text>
</comment>
<comment type="subcellular location">
    <subcellularLocation>
        <location evidence="4">Endoplasmic reticulum</location>
    </subcellularLocation>
</comment>
<comment type="similarity">
    <text evidence="5">Belongs to the FKBP-type PPIase family. FKBP2 subfamily.</text>
</comment>